<organism>
    <name type="scientific">Brevibacillus brevis (strain 47 / JCM 6285 / NBRC 100599)</name>
    <dbReference type="NCBI Taxonomy" id="358681"/>
    <lineage>
        <taxon>Bacteria</taxon>
        <taxon>Bacillati</taxon>
        <taxon>Bacillota</taxon>
        <taxon>Bacilli</taxon>
        <taxon>Bacillales</taxon>
        <taxon>Paenibacillaceae</taxon>
        <taxon>Brevibacillus</taxon>
    </lineage>
</organism>
<name>THIM_BREBN</name>
<dbReference type="EC" id="2.7.1.50" evidence="1"/>
<dbReference type="EMBL" id="AP008955">
    <property type="protein sequence ID" value="BAH44904.1"/>
    <property type="molecule type" value="Genomic_DNA"/>
</dbReference>
<dbReference type="RefSeq" id="WP_015892181.1">
    <property type="nucleotide sequence ID" value="NC_012491.1"/>
</dbReference>
<dbReference type="SMR" id="C0ZGJ5"/>
<dbReference type="STRING" id="358681.BBR47_39270"/>
<dbReference type="KEGG" id="bbe:BBR47_39270"/>
<dbReference type="eggNOG" id="COG2145">
    <property type="taxonomic scope" value="Bacteria"/>
</dbReference>
<dbReference type="HOGENOM" id="CLU_019943_0_1_9"/>
<dbReference type="UniPathway" id="UPA00060">
    <property type="reaction ID" value="UER00139"/>
</dbReference>
<dbReference type="Proteomes" id="UP000001877">
    <property type="component" value="Chromosome"/>
</dbReference>
<dbReference type="GO" id="GO:0005524">
    <property type="term" value="F:ATP binding"/>
    <property type="evidence" value="ECO:0007669"/>
    <property type="project" value="UniProtKB-UniRule"/>
</dbReference>
<dbReference type="GO" id="GO:0004417">
    <property type="term" value="F:hydroxyethylthiazole kinase activity"/>
    <property type="evidence" value="ECO:0007669"/>
    <property type="project" value="UniProtKB-UniRule"/>
</dbReference>
<dbReference type="GO" id="GO:0000287">
    <property type="term" value="F:magnesium ion binding"/>
    <property type="evidence" value="ECO:0007669"/>
    <property type="project" value="UniProtKB-UniRule"/>
</dbReference>
<dbReference type="GO" id="GO:0009228">
    <property type="term" value="P:thiamine biosynthetic process"/>
    <property type="evidence" value="ECO:0007669"/>
    <property type="project" value="UniProtKB-KW"/>
</dbReference>
<dbReference type="GO" id="GO:0009229">
    <property type="term" value="P:thiamine diphosphate biosynthetic process"/>
    <property type="evidence" value="ECO:0007669"/>
    <property type="project" value="UniProtKB-UniRule"/>
</dbReference>
<dbReference type="CDD" id="cd01170">
    <property type="entry name" value="THZ_kinase"/>
    <property type="match status" value="1"/>
</dbReference>
<dbReference type="Gene3D" id="3.40.1190.20">
    <property type="match status" value="1"/>
</dbReference>
<dbReference type="HAMAP" id="MF_00228">
    <property type="entry name" value="Thz_kinase"/>
    <property type="match status" value="1"/>
</dbReference>
<dbReference type="InterPro" id="IPR000417">
    <property type="entry name" value="Hyethyz_kinase"/>
</dbReference>
<dbReference type="InterPro" id="IPR029056">
    <property type="entry name" value="Ribokinase-like"/>
</dbReference>
<dbReference type="NCBIfam" id="NF006830">
    <property type="entry name" value="PRK09355.1"/>
    <property type="match status" value="1"/>
</dbReference>
<dbReference type="NCBIfam" id="TIGR00694">
    <property type="entry name" value="thiM"/>
    <property type="match status" value="1"/>
</dbReference>
<dbReference type="Pfam" id="PF02110">
    <property type="entry name" value="HK"/>
    <property type="match status" value="1"/>
</dbReference>
<dbReference type="PIRSF" id="PIRSF000513">
    <property type="entry name" value="Thz_kinase"/>
    <property type="match status" value="1"/>
</dbReference>
<dbReference type="PRINTS" id="PR01099">
    <property type="entry name" value="HYETHTZKNASE"/>
</dbReference>
<dbReference type="SUPFAM" id="SSF53613">
    <property type="entry name" value="Ribokinase-like"/>
    <property type="match status" value="1"/>
</dbReference>
<sequence length="269" mass="28322">MILETIGQLLIKVREENPLVHNITNVVVTNFTANGLLALGASPVMAYAKQEVADMAKIAGALVLNIGTLNEHEIEAMLIAGKSANQHGVPVLFDPVGAGATSYRTETSQRLAQELDLAFIRGNAAEVANVIGERWEIKGVDAKEAGGDVEDLARAAAKKLRTIVAITGKVDVISDGEKTYSIHNGHPILTKVTGTGCLLTSVMGAFAAIAKDKLIAGAAALVCYGVAAQLAAEKAAEVGPGSFQIEFLNALHNLTAEDVRRLGYIEKRE</sequence>
<keyword id="KW-0067">ATP-binding</keyword>
<keyword id="KW-0418">Kinase</keyword>
<keyword id="KW-0460">Magnesium</keyword>
<keyword id="KW-0479">Metal-binding</keyword>
<keyword id="KW-0547">Nucleotide-binding</keyword>
<keyword id="KW-1185">Reference proteome</keyword>
<keyword id="KW-0784">Thiamine biosynthesis</keyword>
<keyword id="KW-0808">Transferase</keyword>
<proteinExistence type="inferred from homology"/>
<accession>C0ZGJ5</accession>
<evidence type="ECO:0000255" key="1">
    <source>
        <dbReference type="HAMAP-Rule" id="MF_00228"/>
    </source>
</evidence>
<feature type="chain" id="PRO_1000198111" description="Hydroxyethylthiazole kinase">
    <location>
        <begin position="1"/>
        <end position="269"/>
    </location>
</feature>
<feature type="binding site" evidence="1">
    <location>
        <position position="45"/>
    </location>
    <ligand>
        <name>substrate</name>
    </ligand>
</feature>
<feature type="binding site" evidence="1">
    <location>
        <position position="121"/>
    </location>
    <ligand>
        <name>ATP</name>
        <dbReference type="ChEBI" id="CHEBI:30616"/>
    </ligand>
</feature>
<feature type="binding site" evidence="1">
    <location>
        <position position="167"/>
    </location>
    <ligand>
        <name>ATP</name>
        <dbReference type="ChEBI" id="CHEBI:30616"/>
    </ligand>
</feature>
<feature type="binding site" evidence="1">
    <location>
        <position position="194"/>
    </location>
    <ligand>
        <name>substrate</name>
    </ligand>
</feature>
<reference key="1">
    <citation type="submission" date="2005-03" db="EMBL/GenBank/DDBJ databases">
        <title>Brevibacillus brevis strain 47, complete genome.</title>
        <authorList>
            <person name="Hosoyama A."/>
            <person name="Yamada R."/>
            <person name="Hongo Y."/>
            <person name="Terui Y."/>
            <person name="Ankai A."/>
            <person name="Masuyama W."/>
            <person name="Sekiguchi M."/>
            <person name="Takeda T."/>
            <person name="Asano K."/>
            <person name="Ohji S."/>
            <person name="Ichikawa N."/>
            <person name="Narita S."/>
            <person name="Aoki N."/>
            <person name="Miura H."/>
            <person name="Matsushita S."/>
            <person name="Sekigawa T."/>
            <person name="Yamagata H."/>
            <person name="Yoshikawa H."/>
            <person name="Udaka S."/>
            <person name="Tanikawa S."/>
            <person name="Fujita N."/>
        </authorList>
    </citation>
    <scope>NUCLEOTIDE SEQUENCE [LARGE SCALE GENOMIC DNA]</scope>
    <source>
        <strain>47 / JCM 6285 / NBRC 100599</strain>
    </source>
</reference>
<protein>
    <recommendedName>
        <fullName evidence="1">Hydroxyethylthiazole kinase</fullName>
        <ecNumber evidence="1">2.7.1.50</ecNumber>
    </recommendedName>
    <alternativeName>
        <fullName evidence="1">4-methyl-5-beta-hydroxyethylthiazole kinase</fullName>
        <shortName evidence="1">TH kinase</shortName>
        <shortName evidence="1">Thz kinase</shortName>
    </alternativeName>
</protein>
<comment type="function">
    <text evidence="1">Catalyzes the phosphorylation of the hydroxyl group of 4-methyl-5-beta-hydroxyethylthiazole (THZ).</text>
</comment>
<comment type="catalytic activity">
    <reaction evidence="1">
        <text>5-(2-hydroxyethyl)-4-methylthiazole + ATP = 4-methyl-5-(2-phosphooxyethyl)-thiazole + ADP + H(+)</text>
        <dbReference type="Rhea" id="RHEA:24212"/>
        <dbReference type="ChEBI" id="CHEBI:15378"/>
        <dbReference type="ChEBI" id="CHEBI:17957"/>
        <dbReference type="ChEBI" id="CHEBI:30616"/>
        <dbReference type="ChEBI" id="CHEBI:58296"/>
        <dbReference type="ChEBI" id="CHEBI:456216"/>
        <dbReference type="EC" id="2.7.1.50"/>
    </reaction>
</comment>
<comment type="cofactor">
    <cofactor evidence="1">
        <name>Mg(2+)</name>
        <dbReference type="ChEBI" id="CHEBI:18420"/>
    </cofactor>
</comment>
<comment type="pathway">
    <text evidence="1">Cofactor biosynthesis; thiamine diphosphate biosynthesis; 4-methyl-5-(2-phosphoethyl)-thiazole from 5-(2-hydroxyethyl)-4-methylthiazole: step 1/1.</text>
</comment>
<comment type="similarity">
    <text evidence="1">Belongs to the Thz kinase family.</text>
</comment>
<gene>
    <name evidence="1" type="primary">thiM</name>
    <name type="ordered locus">BBR47_39270</name>
</gene>